<feature type="chain" id="PRO_1000134333" description="Small ribosomal subunit protein bS16">
    <location>
        <begin position="1"/>
        <end position="84"/>
    </location>
</feature>
<name>RS16_THISH</name>
<protein>
    <recommendedName>
        <fullName evidence="1">Small ribosomal subunit protein bS16</fullName>
    </recommendedName>
    <alternativeName>
        <fullName evidence="2">30S ribosomal protein S16</fullName>
    </alternativeName>
</protein>
<evidence type="ECO:0000255" key="1">
    <source>
        <dbReference type="HAMAP-Rule" id="MF_00385"/>
    </source>
</evidence>
<evidence type="ECO:0000305" key="2"/>
<organism>
    <name type="scientific">Thioalkalivibrio sulfidiphilus (strain HL-EbGR7)</name>
    <dbReference type="NCBI Taxonomy" id="396588"/>
    <lineage>
        <taxon>Bacteria</taxon>
        <taxon>Pseudomonadati</taxon>
        <taxon>Pseudomonadota</taxon>
        <taxon>Gammaproteobacteria</taxon>
        <taxon>Chromatiales</taxon>
        <taxon>Ectothiorhodospiraceae</taxon>
        <taxon>Thioalkalivibrio</taxon>
    </lineage>
</organism>
<comment type="similarity">
    <text evidence="1">Belongs to the bacterial ribosomal protein bS16 family.</text>
</comment>
<proteinExistence type="inferred from homology"/>
<keyword id="KW-1185">Reference proteome</keyword>
<keyword id="KW-0687">Ribonucleoprotein</keyword>
<keyword id="KW-0689">Ribosomal protein</keyword>
<reference key="1">
    <citation type="journal article" date="2011" name="Stand. Genomic Sci.">
        <title>Complete genome sequence of 'Thioalkalivibrio sulfidophilus' HL-EbGr7.</title>
        <authorList>
            <person name="Muyzer G."/>
            <person name="Sorokin D.Y."/>
            <person name="Mavromatis K."/>
            <person name="Lapidus A."/>
            <person name="Clum A."/>
            <person name="Ivanova N."/>
            <person name="Pati A."/>
            <person name="d'Haeseleer P."/>
            <person name="Woyke T."/>
            <person name="Kyrpides N.C."/>
        </authorList>
    </citation>
    <scope>NUCLEOTIDE SEQUENCE [LARGE SCALE GENOMIC DNA]</scope>
    <source>
        <strain>HL-EbGR7</strain>
    </source>
</reference>
<sequence length="84" mass="9597">MVTIRLARGGAKKAPFYHIVVTDSRSPRDSGYIEQLGYFNPVARGQEVRLHMNQERIEHWVSKGAQTSERVGKLLADFRKQNQA</sequence>
<gene>
    <name evidence="1" type="primary">rpsP</name>
    <name type="ordered locus">Tgr7_0846</name>
</gene>
<dbReference type="EMBL" id="CP001339">
    <property type="protein sequence ID" value="ACL71937.1"/>
    <property type="molecule type" value="Genomic_DNA"/>
</dbReference>
<dbReference type="RefSeq" id="WP_012637425.1">
    <property type="nucleotide sequence ID" value="NC_011901.1"/>
</dbReference>
<dbReference type="SMR" id="B8GN76"/>
<dbReference type="STRING" id="396588.Tgr7_0846"/>
<dbReference type="KEGG" id="tgr:Tgr7_0846"/>
<dbReference type="eggNOG" id="COG0228">
    <property type="taxonomic scope" value="Bacteria"/>
</dbReference>
<dbReference type="HOGENOM" id="CLU_100590_5_1_6"/>
<dbReference type="OrthoDB" id="9807878at2"/>
<dbReference type="Proteomes" id="UP000002383">
    <property type="component" value="Chromosome"/>
</dbReference>
<dbReference type="GO" id="GO:0005737">
    <property type="term" value="C:cytoplasm"/>
    <property type="evidence" value="ECO:0007669"/>
    <property type="project" value="UniProtKB-ARBA"/>
</dbReference>
<dbReference type="GO" id="GO:0015935">
    <property type="term" value="C:small ribosomal subunit"/>
    <property type="evidence" value="ECO:0007669"/>
    <property type="project" value="TreeGrafter"/>
</dbReference>
<dbReference type="GO" id="GO:0003735">
    <property type="term" value="F:structural constituent of ribosome"/>
    <property type="evidence" value="ECO:0007669"/>
    <property type="project" value="InterPro"/>
</dbReference>
<dbReference type="GO" id="GO:0006412">
    <property type="term" value="P:translation"/>
    <property type="evidence" value="ECO:0007669"/>
    <property type="project" value="UniProtKB-UniRule"/>
</dbReference>
<dbReference type="Gene3D" id="3.30.1320.10">
    <property type="match status" value="1"/>
</dbReference>
<dbReference type="HAMAP" id="MF_00385">
    <property type="entry name" value="Ribosomal_bS16"/>
    <property type="match status" value="1"/>
</dbReference>
<dbReference type="InterPro" id="IPR000307">
    <property type="entry name" value="Ribosomal_bS16"/>
</dbReference>
<dbReference type="InterPro" id="IPR020592">
    <property type="entry name" value="Ribosomal_bS16_CS"/>
</dbReference>
<dbReference type="InterPro" id="IPR023803">
    <property type="entry name" value="Ribosomal_bS16_dom_sf"/>
</dbReference>
<dbReference type="NCBIfam" id="TIGR00002">
    <property type="entry name" value="S16"/>
    <property type="match status" value="1"/>
</dbReference>
<dbReference type="PANTHER" id="PTHR12919">
    <property type="entry name" value="30S RIBOSOMAL PROTEIN S16"/>
    <property type="match status" value="1"/>
</dbReference>
<dbReference type="PANTHER" id="PTHR12919:SF20">
    <property type="entry name" value="SMALL RIBOSOMAL SUBUNIT PROTEIN BS16M"/>
    <property type="match status" value="1"/>
</dbReference>
<dbReference type="Pfam" id="PF00886">
    <property type="entry name" value="Ribosomal_S16"/>
    <property type="match status" value="1"/>
</dbReference>
<dbReference type="SUPFAM" id="SSF54565">
    <property type="entry name" value="Ribosomal protein S16"/>
    <property type="match status" value="1"/>
</dbReference>
<dbReference type="PROSITE" id="PS00732">
    <property type="entry name" value="RIBOSOMAL_S16"/>
    <property type="match status" value="1"/>
</dbReference>
<accession>B8GN76</accession>